<dbReference type="EMBL" id="CP001176">
    <property type="protein sequence ID" value="ACK63728.1"/>
    <property type="molecule type" value="Genomic_DNA"/>
</dbReference>
<dbReference type="RefSeq" id="WP_000776437.1">
    <property type="nucleotide sequence ID" value="NZ_VEHB01000002.1"/>
</dbReference>
<dbReference type="SMR" id="B7HDT4"/>
<dbReference type="GeneID" id="72450490"/>
<dbReference type="KEGG" id="bcb:BCB4264_A3909"/>
<dbReference type="HOGENOM" id="CLU_089475_6_3_9"/>
<dbReference type="Proteomes" id="UP000007096">
    <property type="component" value="Chromosome"/>
</dbReference>
<dbReference type="GO" id="GO:0005829">
    <property type="term" value="C:cytosol"/>
    <property type="evidence" value="ECO:0007669"/>
    <property type="project" value="TreeGrafter"/>
</dbReference>
<dbReference type="GO" id="GO:0043024">
    <property type="term" value="F:ribosomal small subunit binding"/>
    <property type="evidence" value="ECO:0007669"/>
    <property type="project" value="TreeGrafter"/>
</dbReference>
<dbReference type="GO" id="GO:0030490">
    <property type="term" value="P:maturation of SSU-rRNA"/>
    <property type="evidence" value="ECO:0007669"/>
    <property type="project" value="UniProtKB-UniRule"/>
</dbReference>
<dbReference type="FunFam" id="3.30.300.20:FF:000009">
    <property type="entry name" value="Ribosome-binding factor A"/>
    <property type="match status" value="1"/>
</dbReference>
<dbReference type="Gene3D" id="3.30.300.20">
    <property type="match status" value="1"/>
</dbReference>
<dbReference type="HAMAP" id="MF_00003">
    <property type="entry name" value="RbfA"/>
    <property type="match status" value="1"/>
</dbReference>
<dbReference type="InterPro" id="IPR015946">
    <property type="entry name" value="KH_dom-like_a/b"/>
</dbReference>
<dbReference type="InterPro" id="IPR000238">
    <property type="entry name" value="RbfA"/>
</dbReference>
<dbReference type="InterPro" id="IPR023799">
    <property type="entry name" value="RbfA_dom_sf"/>
</dbReference>
<dbReference type="InterPro" id="IPR020053">
    <property type="entry name" value="Ribosome-bd_factorA_CS"/>
</dbReference>
<dbReference type="NCBIfam" id="TIGR00082">
    <property type="entry name" value="rbfA"/>
    <property type="match status" value="1"/>
</dbReference>
<dbReference type="PANTHER" id="PTHR33515">
    <property type="entry name" value="RIBOSOME-BINDING FACTOR A, CHLOROPLASTIC-RELATED"/>
    <property type="match status" value="1"/>
</dbReference>
<dbReference type="PANTHER" id="PTHR33515:SF1">
    <property type="entry name" value="RIBOSOME-BINDING FACTOR A, CHLOROPLASTIC-RELATED"/>
    <property type="match status" value="1"/>
</dbReference>
<dbReference type="Pfam" id="PF02033">
    <property type="entry name" value="RBFA"/>
    <property type="match status" value="1"/>
</dbReference>
<dbReference type="SUPFAM" id="SSF89919">
    <property type="entry name" value="Ribosome-binding factor A, RbfA"/>
    <property type="match status" value="1"/>
</dbReference>
<dbReference type="PROSITE" id="PS01319">
    <property type="entry name" value="RBFA"/>
    <property type="match status" value="1"/>
</dbReference>
<comment type="function">
    <text evidence="1">One of several proteins that assist in the late maturation steps of the functional core of the 30S ribosomal subunit. Associates with free 30S ribosomal subunits (but not with 30S subunits that are part of 70S ribosomes or polysomes). Required for efficient processing of 16S rRNA. May interact with the 5'-terminal helix region of 16S rRNA.</text>
</comment>
<comment type="subunit">
    <text evidence="1">Monomer. Binds 30S ribosomal subunits, but not 50S ribosomal subunits or 70S ribosomes.</text>
</comment>
<comment type="subcellular location">
    <subcellularLocation>
        <location evidence="1">Cytoplasm</location>
    </subcellularLocation>
</comment>
<comment type="similarity">
    <text evidence="1">Belongs to the RbfA family.</text>
</comment>
<accession>B7HDT4</accession>
<proteinExistence type="inferred from homology"/>
<reference key="1">
    <citation type="submission" date="2008-10" db="EMBL/GenBank/DDBJ databases">
        <title>Genome sequence of Bacillus cereus B4264.</title>
        <authorList>
            <person name="Dodson R.J."/>
            <person name="Durkin A.S."/>
            <person name="Rosovitz M.J."/>
            <person name="Rasko D.A."/>
            <person name="Hoffmaster A."/>
            <person name="Ravel J."/>
            <person name="Sutton G."/>
        </authorList>
    </citation>
    <scope>NUCLEOTIDE SEQUENCE [LARGE SCALE GENOMIC DNA]</scope>
    <source>
        <strain>B4264</strain>
    </source>
</reference>
<keyword id="KW-0963">Cytoplasm</keyword>
<keyword id="KW-0690">Ribosome biogenesis</keyword>
<protein>
    <recommendedName>
        <fullName evidence="1">Ribosome-binding factor A</fullName>
    </recommendedName>
</protein>
<feature type="chain" id="PRO_1000193230" description="Ribosome-binding factor A">
    <location>
        <begin position="1"/>
        <end position="118"/>
    </location>
</feature>
<organism>
    <name type="scientific">Bacillus cereus (strain B4264)</name>
    <dbReference type="NCBI Taxonomy" id="405532"/>
    <lineage>
        <taxon>Bacteria</taxon>
        <taxon>Bacillati</taxon>
        <taxon>Bacillota</taxon>
        <taxon>Bacilli</taxon>
        <taxon>Bacillales</taxon>
        <taxon>Bacillaceae</taxon>
        <taxon>Bacillus</taxon>
        <taxon>Bacillus cereus group</taxon>
    </lineage>
</organism>
<name>RBFA_BACC4</name>
<sequence length="118" mass="13483">MKLRANRVGEQMKKELGDIISRKIKDPRIGFVTVTDVQVSGDLQIAKVYISVLGDEEQKENTLKGLAKAKGFIRSEIGQRIRLRKTPEITFEFDESIGYGHRIDTLLHEINKDGKREE</sequence>
<evidence type="ECO:0000255" key="1">
    <source>
        <dbReference type="HAMAP-Rule" id="MF_00003"/>
    </source>
</evidence>
<gene>
    <name evidence="1" type="primary">rbfA</name>
    <name type="ordered locus">BCB4264_A3909</name>
</gene>